<evidence type="ECO:0000255" key="1">
    <source>
        <dbReference type="HAMAP-Rule" id="MF_00154"/>
    </source>
</evidence>
<dbReference type="EC" id="2.5.1.141" evidence="1"/>
<dbReference type="EMBL" id="CP000800">
    <property type="protein sequence ID" value="ABV20910.1"/>
    <property type="molecule type" value="Genomic_DNA"/>
</dbReference>
<dbReference type="RefSeq" id="WP_000971336.1">
    <property type="nucleotide sequence ID" value="NC_009801.1"/>
</dbReference>
<dbReference type="SMR" id="A7ZII5"/>
<dbReference type="GeneID" id="75202853"/>
<dbReference type="KEGG" id="ecw:EcE24377A_0463"/>
<dbReference type="HOGENOM" id="CLU_029631_0_0_6"/>
<dbReference type="UniPathway" id="UPA00834">
    <property type="reaction ID" value="UER00712"/>
</dbReference>
<dbReference type="Proteomes" id="UP000001122">
    <property type="component" value="Chromosome"/>
</dbReference>
<dbReference type="GO" id="GO:0005886">
    <property type="term" value="C:plasma membrane"/>
    <property type="evidence" value="ECO:0007669"/>
    <property type="project" value="UniProtKB-SubCell"/>
</dbReference>
<dbReference type="GO" id="GO:0008495">
    <property type="term" value="F:protoheme IX farnesyltransferase activity"/>
    <property type="evidence" value="ECO:0007669"/>
    <property type="project" value="UniProtKB-UniRule"/>
</dbReference>
<dbReference type="GO" id="GO:0048034">
    <property type="term" value="P:heme O biosynthetic process"/>
    <property type="evidence" value="ECO:0007669"/>
    <property type="project" value="UniProtKB-UniRule"/>
</dbReference>
<dbReference type="CDD" id="cd13957">
    <property type="entry name" value="PT_UbiA_Cox10"/>
    <property type="match status" value="1"/>
</dbReference>
<dbReference type="FunFam" id="1.10.357.140:FF:000001">
    <property type="entry name" value="Protoheme IX farnesyltransferase"/>
    <property type="match status" value="1"/>
</dbReference>
<dbReference type="Gene3D" id="1.10.357.140">
    <property type="entry name" value="UbiA prenyltransferase"/>
    <property type="match status" value="1"/>
</dbReference>
<dbReference type="HAMAP" id="MF_00154">
    <property type="entry name" value="CyoE_CtaB"/>
    <property type="match status" value="1"/>
</dbReference>
<dbReference type="InterPro" id="IPR006369">
    <property type="entry name" value="Protohaem_IX_farnesylTrfase"/>
</dbReference>
<dbReference type="InterPro" id="IPR000537">
    <property type="entry name" value="UbiA_prenyltransferase"/>
</dbReference>
<dbReference type="InterPro" id="IPR030470">
    <property type="entry name" value="UbiA_prenylTrfase_CS"/>
</dbReference>
<dbReference type="InterPro" id="IPR044878">
    <property type="entry name" value="UbiA_sf"/>
</dbReference>
<dbReference type="NCBIfam" id="TIGR01473">
    <property type="entry name" value="cyoE_ctaB"/>
    <property type="match status" value="1"/>
</dbReference>
<dbReference type="NCBIfam" id="NF003348">
    <property type="entry name" value="PRK04375.1-1"/>
    <property type="match status" value="1"/>
</dbReference>
<dbReference type="PANTHER" id="PTHR43448">
    <property type="entry name" value="PROTOHEME IX FARNESYLTRANSFERASE, MITOCHONDRIAL"/>
    <property type="match status" value="1"/>
</dbReference>
<dbReference type="PANTHER" id="PTHR43448:SF2">
    <property type="entry name" value="PROTOHEME IX FARNESYLTRANSFERASE, MITOCHONDRIAL"/>
    <property type="match status" value="1"/>
</dbReference>
<dbReference type="Pfam" id="PF01040">
    <property type="entry name" value="UbiA"/>
    <property type="match status" value="1"/>
</dbReference>
<dbReference type="PROSITE" id="PS00943">
    <property type="entry name" value="UBIA"/>
    <property type="match status" value="1"/>
</dbReference>
<sequence length="296" mass="32248">MMFKQYLQVTKPGIIFGNLISVIGGFLLASKGSIDYPLFIYTLVGVSLVVASGCVFNNYIDRDIDRKMERTKNRVLVKGLISPAVSLVYATLLGIAGFMLLWFGANPLACWLGVMGFVVYVGVYSLYMKRHSVYGTLIGSLSGAAPPVIGYCAVTGEFDSGAAILLAIFSLWQMPHSYAIAIFRFKDYQAANIPVLPVVKGISVAKNHITLYIIAFAVATLMLSLGGYAGYKYLVVAAAVSVWWLGMALRGYKVADDRIWARKLFGFSIIAITALSVMMSVDFMVPDSHTLLAAVW</sequence>
<proteinExistence type="inferred from homology"/>
<name>CYOE_ECO24</name>
<organism>
    <name type="scientific">Escherichia coli O139:H28 (strain E24377A / ETEC)</name>
    <dbReference type="NCBI Taxonomy" id="331111"/>
    <lineage>
        <taxon>Bacteria</taxon>
        <taxon>Pseudomonadati</taxon>
        <taxon>Pseudomonadota</taxon>
        <taxon>Gammaproteobacteria</taxon>
        <taxon>Enterobacterales</taxon>
        <taxon>Enterobacteriaceae</taxon>
        <taxon>Escherichia</taxon>
    </lineage>
</organism>
<keyword id="KW-0997">Cell inner membrane</keyword>
<keyword id="KW-1003">Cell membrane</keyword>
<keyword id="KW-0350">Heme biosynthesis</keyword>
<keyword id="KW-0472">Membrane</keyword>
<keyword id="KW-1185">Reference proteome</keyword>
<keyword id="KW-0808">Transferase</keyword>
<keyword id="KW-0812">Transmembrane</keyword>
<keyword id="KW-1133">Transmembrane helix</keyword>
<reference key="1">
    <citation type="journal article" date="2008" name="J. Bacteriol.">
        <title>The pangenome structure of Escherichia coli: comparative genomic analysis of E. coli commensal and pathogenic isolates.</title>
        <authorList>
            <person name="Rasko D.A."/>
            <person name="Rosovitz M.J."/>
            <person name="Myers G.S.A."/>
            <person name="Mongodin E.F."/>
            <person name="Fricke W.F."/>
            <person name="Gajer P."/>
            <person name="Crabtree J."/>
            <person name="Sebaihia M."/>
            <person name="Thomson N.R."/>
            <person name="Chaudhuri R."/>
            <person name="Henderson I.R."/>
            <person name="Sperandio V."/>
            <person name="Ravel J."/>
        </authorList>
    </citation>
    <scope>NUCLEOTIDE SEQUENCE [LARGE SCALE GENOMIC DNA]</scope>
    <source>
        <strain>E24377A / ETEC</strain>
    </source>
</reference>
<comment type="function">
    <text evidence="1">Converts heme B (protoheme IX) to heme O by substitution of the vinyl group on carbon 2 of heme B porphyrin ring with a hydroxyethyl farnesyl side group.</text>
</comment>
<comment type="catalytic activity">
    <reaction evidence="1">
        <text>heme b + (2E,6E)-farnesyl diphosphate + H2O = Fe(II)-heme o + diphosphate</text>
        <dbReference type="Rhea" id="RHEA:28070"/>
        <dbReference type="ChEBI" id="CHEBI:15377"/>
        <dbReference type="ChEBI" id="CHEBI:33019"/>
        <dbReference type="ChEBI" id="CHEBI:60344"/>
        <dbReference type="ChEBI" id="CHEBI:60530"/>
        <dbReference type="ChEBI" id="CHEBI:175763"/>
        <dbReference type="EC" id="2.5.1.141"/>
    </reaction>
</comment>
<comment type="pathway">
    <text evidence="1">Porphyrin-containing compound metabolism; heme O biosynthesis; heme O from protoheme: step 1/1.</text>
</comment>
<comment type="subcellular location">
    <subcellularLocation>
        <location evidence="1">Cell inner membrane</location>
        <topology evidence="1">Multi-pass membrane protein</topology>
    </subcellularLocation>
</comment>
<comment type="miscellaneous">
    <text evidence="1">Carbon 2 of the heme B porphyrin ring is defined according to the Fischer nomenclature.</text>
</comment>
<comment type="similarity">
    <text evidence="1">Belongs to the UbiA prenyltransferase family. Protoheme IX farnesyltransferase subfamily.</text>
</comment>
<gene>
    <name evidence="1" type="primary">cyoE</name>
    <name type="ordered locus">EcE24377A_0463</name>
</gene>
<feature type="chain" id="PRO_0000345997" description="Protoheme IX farnesyltransferase">
    <location>
        <begin position="1"/>
        <end position="296"/>
    </location>
</feature>
<feature type="topological domain" description="Cytoplasmic" evidence="1">
    <location>
        <begin position="1"/>
        <end position="9"/>
    </location>
</feature>
<feature type="transmembrane region" description="Helical" evidence="1">
    <location>
        <begin position="10"/>
        <end position="28"/>
    </location>
</feature>
<feature type="topological domain" description="Periplasmic" evidence="1">
    <location>
        <begin position="29"/>
        <end position="37"/>
    </location>
</feature>
<feature type="transmembrane region" description="Helical" evidence="1">
    <location>
        <begin position="38"/>
        <end position="56"/>
    </location>
</feature>
<feature type="topological domain" description="Cytoplasmic" evidence="1">
    <location>
        <begin position="57"/>
        <end position="78"/>
    </location>
</feature>
<feature type="transmembrane region" description="Helical" evidence="1">
    <location>
        <begin position="79"/>
        <end position="97"/>
    </location>
</feature>
<feature type="topological domain" description="Periplasmic" evidence="1">
    <location>
        <begin position="98"/>
        <end position="107"/>
    </location>
</feature>
<feature type="transmembrane region" description="Helical" evidence="1">
    <location>
        <begin position="108"/>
        <end position="126"/>
    </location>
</feature>
<feature type="topological domain" description="Cytoplasmic" evidence="1">
    <location>
        <begin position="127"/>
        <end position="197"/>
    </location>
</feature>
<feature type="transmembrane region" description="Helical" evidence="1">
    <location>
        <begin position="198"/>
        <end position="216"/>
    </location>
</feature>
<feature type="topological domain" description="Periplasmic" evidence="1">
    <location>
        <begin position="217"/>
        <end position="228"/>
    </location>
</feature>
<feature type="transmembrane region" description="Helical" evidence="1">
    <location>
        <begin position="229"/>
        <end position="247"/>
    </location>
</feature>
<feature type="topological domain" description="Cytoplasmic" evidence="1">
    <location>
        <begin position="248"/>
        <end position="268"/>
    </location>
</feature>
<feature type="transmembrane region" description="Helical" evidence="1">
    <location>
        <begin position="269"/>
        <end position="287"/>
    </location>
</feature>
<feature type="topological domain" description="Periplasmic" evidence="1">
    <location>
        <begin position="288"/>
        <end position="296"/>
    </location>
</feature>
<accession>A7ZII5</accession>
<protein>
    <recommendedName>
        <fullName evidence="1">Protoheme IX farnesyltransferase</fullName>
        <ecNumber evidence="1">2.5.1.141</ecNumber>
    </recommendedName>
    <alternativeName>
        <fullName evidence="1">Heme B farnesyltransferase</fullName>
    </alternativeName>
    <alternativeName>
        <fullName evidence="1">Heme O synthase</fullName>
    </alternativeName>
</protein>